<dbReference type="EC" id="2.8.4.4" evidence="1"/>
<dbReference type="EMBL" id="CP000439">
    <property type="protein sequence ID" value="ABK89264.1"/>
    <property type="molecule type" value="Genomic_DNA"/>
</dbReference>
<dbReference type="RefSeq" id="WP_003038377.1">
    <property type="nucleotide sequence ID" value="NC_008601.1"/>
</dbReference>
<dbReference type="SMR" id="A0Q4U9"/>
<dbReference type="KEGG" id="ftn:FTN_0358"/>
<dbReference type="KEGG" id="ftx:AW25_1681"/>
<dbReference type="BioCyc" id="FTUL401614:G1G75-371-MONOMER"/>
<dbReference type="Proteomes" id="UP000000762">
    <property type="component" value="Chromosome"/>
</dbReference>
<dbReference type="GO" id="GO:0005829">
    <property type="term" value="C:cytosol"/>
    <property type="evidence" value="ECO:0007669"/>
    <property type="project" value="TreeGrafter"/>
</dbReference>
<dbReference type="GO" id="GO:0051539">
    <property type="term" value="F:4 iron, 4 sulfur cluster binding"/>
    <property type="evidence" value="ECO:0007669"/>
    <property type="project" value="UniProtKB-UniRule"/>
</dbReference>
<dbReference type="GO" id="GO:0035599">
    <property type="term" value="F:aspartic acid methylthiotransferase activity"/>
    <property type="evidence" value="ECO:0007669"/>
    <property type="project" value="TreeGrafter"/>
</dbReference>
<dbReference type="GO" id="GO:0046872">
    <property type="term" value="F:metal ion binding"/>
    <property type="evidence" value="ECO:0007669"/>
    <property type="project" value="UniProtKB-KW"/>
</dbReference>
<dbReference type="GO" id="GO:0103039">
    <property type="term" value="F:protein methylthiotransferase activity"/>
    <property type="evidence" value="ECO:0007669"/>
    <property type="project" value="UniProtKB-EC"/>
</dbReference>
<dbReference type="GO" id="GO:0006400">
    <property type="term" value="P:tRNA modification"/>
    <property type="evidence" value="ECO:0007669"/>
    <property type="project" value="InterPro"/>
</dbReference>
<dbReference type="CDD" id="cd01335">
    <property type="entry name" value="Radical_SAM"/>
    <property type="match status" value="1"/>
</dbReference>
<dbReference type="FunFam" id="3.40.50.12160:FF:000002">
    <property type="entry name" value="Ribosomal protein S12 methylthiotransferase RimO"/>
    <property type="match status" value="1"/>
</dbReference>
<dbReference type="FunFam" id="3.80.30.20:FF:000001">
    <property type="entry name" value="tRNA-2-methylthio-N(6)-dimethylallyladenosine synthase 2"/>
    <property type="match status" value="1"/>
</dbReference>
<dbReference type="Gene3D" id="3.40.50.12160">
    <property type="entry name" value="Methylthiotransferase, N-terminal domain"/>
    <property type="match status" value="1"/>
</dbReference>
<dbReference type="Gene3D" id="2.40.50.140">
    <property type="entry name" value="Nucleic acid-binding proteins"/>
    <property type="match status" value="1"/>
</dbReference>
<dbReference type="Gene3D" id="3.80.30.20">
    <property type="entry name" value="tm_1862 like domain"/>
    <property type="match status" value="1"/>
</dbReference>
<dbReference type="HAMAP" id="MF_01865">
    <property type="entry name" value="MTTase_RimO"/>
    <property type="match status" value="1"/>
</dbReference>
<dbReference type="InterPro" id="IPR006638">
    <property type="entry name" value="Elp3/MiaA/NifB-like_rSAM"/>
</dbReference>
<dbReference type="InterPro" id="IPR005839">
    <property type="entry name" value="Methylthiotransferase"/>
</dbReference>
<dbReference type="InterPro" id="IPR020612">
    <property type="entry name" value="Methylthiotransferase_CS"/>
</dbReference>
<dbReference type="InterPro" id="IPR013848">
    <property type="entry name" value="Methylthiotransferase_N"/>
</dbReference>
<dbReference type="InterPro" id="IPR038135">
    <property type="entry name" value="Methylthiotransferase_N_sf"/>
</dbReference>
<dbReference type="InterPro" id="IPR012340">
    <property type="entry name" value="NA-bd_OB-fold"/>
</dbReference>
<dbReference type="InterPro" id="IPR005840">
    <property type="entry name" value="Ribosomal_uS12_MeSTrfase_RimO"/>
</dbReference>
<dbReference type="InterPro" id="IPR007197">
    <property type="entry name" value="rSAM"/>
</dbReference>
<dbReference type="InterPro" id="IPR023404">
    <property type="entry name" value="rSAM_horseshoe"/>
</dbReference>
<dbReference type="InterPro" id="IPR002792">
    <property type="entry name" value="TRAM_dom"/>
</dbReference>
<dbReference type="NCBIfam" id="TIGR01125">
    <property type="entry name" value="30S ribosomal protein S12 methylthiotransferase RimO"/>
    <property type="match status" value="1"/>
</dbReference>
<dbReference type="NCBIfam" id="TIGR00089">
    <property type="entry name" value="MiaB/RimO family radical SAM methylthiotransferase"/>
    <property type="match status" value="1"/>
</dbReference>
<dbReference type="PANTHER" id="PTHR43837">
    <property type="entry name" value="RIBOSOMAL PROTEIN S12 METHYLTHIOTRANSFERASE RIMO"/>
    <property type="match status" value="1"/>
</dbReference>
<dbReference type="PANTHER" id="PTHR43837:SF1">
    <property type="entry name" value="RIBOSOMAL PROTEIN US12 METHYLTHIOTRANSFERASE RIMO"/>
    <property type="match status" value="1"/>
</dbReference>
<dbReference type="Pfam" id="PF04055">
    <property type="entry name" value="Radical_SAM"/>
    <property type="match status" value="1"/>
</dbReference>
<dbReference type="Pfam" id="PF18693">
    <property type="entry name" value="TRAM_2"/>
    <property type="match status" value="1"/>
</dbReference>
<dbReference type="Pfam" id="PF00919">
    <property type="entry name" value="UPF0004"/>
    <property type="match status" value="1"/>
</dbReference>
<dbReference type="SFLD" id="SFLDG01082">
    <property type="entry name" value="B12-binding_domain_containing"/>
    <property type="match status" value="1"/>
</dbReference>
<dbReference type="SFLD" id="SFLDG01061">
    <property type="entry name" value="methylthiotransferase"/>
    <property type="match status" value="1"/>
</dbReference>
<dbReference type="SFLD" id="SFLDF00274">
    <property type="entry name" value="ribosomal_protein_S12_methylth"/>
    <property type="match status" value="1"/>
</dbReference>
<dbReference type="SMART" id="SM00729">
    <property type="entry name" value="Elp3"/>
    <property type="match status" value="1"/>
</dbReference>
<dbReference type="SUPFAM" id="SSF102114">
    <property type="entry name" value="Radical SAM enzymes"/>
    <property type="match status" value="1"/>
</dbReference>
<dbReference type="PROSITE" id="PS51449">
    <property type="entry name" value="MTTASE_N"/>
    <property type="match status" value="1"/>
</dbReference>
<dbReference type="PROSITE" id="PS01278">
    <property type="entry name" value="MTTASE_RADICAL"/>
    <property type="match status" value="1"/>
</dbReference>
<dbReference type="PROSITE" id="PS51918">
    <property type="entry name" value="RADICAL_SAM"/>
    <property type="match status" value="1"/>
</dbReference>
<dbReference type="PROSITE" id="PS50926">
    <property type="entry name" value="TRAM"/>
    <property type="match status" value="1"/>
</dbReference>
<accession>A0Q4U9</accession>
<feature type="chain" id="PRO_0000374840" description="Ribosomal protein uS12 methylthiotransferase RimO">
    <location>
        <begin position="1"/>
        <end position="439"/>
    </location>
</feature>
<feature type="domain" description="MTTase N-terminal" evidence="1">
    <location>
        <begin position="5"/>
        <end position="115"/>
    </location>
</feature>
<feature type="domain" description="Radical SAM core" evidence="2">
    <location>
        <begin position="132"/>
        <end position="369"/>
    </location>
</feature>
<feature type="domain" description="TRAM" evidence="1">
    <location>
        <begin position="372"/>
        <end position="439"/>
    </location>
</feature>
<feature type="binding site" evidence="1">
    <location>
        <position position="14"/>
    </location>
    <ligand>
        <name>[4Fe-4S] cluster</name>
        <dbReference type="ChEBI" id="CHEBI:49883"/>
        <label>1</label>
    </ligand>
</feature>
<feature type="binding site" evidence="1">
    <location>
        <position position="50"/>
    </location>
    <ligand>
        <name>[4Fe-4S] cluster</name>
        <dbReference type="ChEBI" id="CHEBI:49883"/>
        <label>1</label>
    </ligand>
</feature>
<feature type="binding site" evidence="1">
    <location>
        <position position="79"/>
    </location>
    <ligand>
        <name>[4Fe-4S] cluster</name>
        <dbReference type="ChEBI" id="CHEBI:49883"/>
        <label>1</label>
    </ligand>
</feature>
<feature type="binding site" evidence="1">
    <location>
        <position position="146"/>
    </location>
    <ligand>
        <name>[4Fe-4S] cluster</name>
        <dbReference type="ChEBI" id="CHEBI:49883"/>
        <label>2</label>
        <note>4Fe-4S-S-AdoMet</note>
    </ligand>
</feature>
<feature type="binding site" evidence="1">
    <location>
        <position position="150"/>
    </location>
    <ligand>
        <name>[4Fe-4S] cluster</name>
        <dbReference type="ChEBI" id="CHEBI:49883"/>
        <label>2</label>
        <note>4Fe-4S-S-AdoMet</note>
    </ligand>
</feature>
<feature type="binding site" evidence="1">
    <location>
        <position position="153"/>
    </location>
    <ligand>
        <name>[4Fe-4S] cluster</name>
        <dbReference type="ChEBI" id="CHEBI:49883"/>
        <label>2</label>
        <note>4Fe-4S-S-AdoMet</note>
    </ligand>
</feature>
<keyword id="KW-0004">4Fe-4S</keyword>
<keyword id="KW-0963">Cytoplasm</keyword>
<keyword id="KW-0408">Iron</keyword>
<keyword id="KW-0411">Iron-sulfur</keyword>
<keyword id="KW-0479">Metal-binding</keyword>
<keyword id="KW-0949">S-adenosyl-L-methionine</keyword>
<keyword id="KW-0808">Transferase</keyword>
<proteinExistence type="inferred from homology"/>
<name>RIMO_FRATN</name>
<comment type="function">
    <text evidence="1">Catalyzes the methylthiolation of an aspartic acid residue of ribosomal protein uS12.</text>
</comment>
<comment type="catalytic activity">
    <reaction evidence="1">
        <text>L-aspartate(89)-[ribosomal protein uS12]-hydrogen + (sulfur carrier)-SH + AH2 + 2 S-adenosyl-L-methionine = 3-methylsulfanyl-L-aspartate(89)-[ribosomal protein uS12]-hydrogen + (sulfur carrier)-H + 5'-deoxyadenosine + L-methionine + A + S-adenosyl-L-homocysteine + 2 H(+)</text>
        <dbReference type="Rhea" id="RHEA:37087"/>
        <dbReference type="Rhea" id="RHEA-COMP:10460"/>
        <dbReference type="Rhea" id="RHEA-COMP:10461"/>
        <dbReference type="Rhea" id="RHEA-COMP:14737"/>
        <dbReference type="Rhea" id="RHEA-COMP:14739"/>
        <dbReference type="ChEBI" id="CHEBI:13193"/>
        <dbReference type="ChEBI" id="CHEBI:15378"/>
        <dbReference type="ChEBI" id="CHEBI:17319"/>
        <dbReference type="ChEBI" id="CHEBI:17499"/>
        <dbReference type="ChEBI" id="CHEBI:29917"/>
        <dbReference type="ChEBI" id="CHEBI:29961"/>
        <dbReference type="ChEBI" id="CHEBI:57844"/>
        <dbReference type="ChEBI" id="CHEBI:57856"/>
        <dbReference type="ChEBI" id="CHEBI:59789"/>
        <dbReference type="ChEBI" id="CHEBI:64428"/>
        <dbReference type="ChEBI" id="CHEBI:73599"/>
        <dbReference type="EC" id="2.8.4.4"/>
    </reaction>
</comment>
<comment type="cofactor">
    <cofactor evidence="1">
        <name>[4Fe-4S] cluster</name>
        <dbReference type="ChEBI" id="CHEBI:49883"/>
    </cofactor>
    <text evidence="1">Binds 2 [4Fe-4S] clusters. One cluster is coordinated with 3 cysteines and an exchangeable S-adenosyl-L-methionine.</text>
</comment>
<comment type="subcellular location">
    <subcellularLocation>
        <location evidence="1">Cytoplasm</location>
    </subcellularLocation>
</comment>
<comment type="similarity">
    <text evidence="1">Belongs to the methylthiotransferase family. RimO subfamily.</text>
</comment>
<protein>
    <recommendedName>
        <fullName evidence="1">Ribosomal protein uS12 methylthiotransferase RimO</fullName>
        <shortName evidence="1">uS12 MTTase</shortName>
        <shortName evidence="1">uS12 methylthiotransferase</shortName>
        <ecNumber evidence="1">2.8.4.4</ecNumber>
    </recommendedName>
    <alternativeName>
        <fullName evidence="1">Ribosomal protein uS12 (aspartate-C(3))-methylthiotransferase</fullName>
    </alternativeName>
    <alternativeName>
        <fullName evidence="1">Ribosome maturation factor RimO</fullName>
    </alternativeName>
</protein>
<sequence>MIKIPKIGFVSLGCPKNLVDSERIITKLKAEGYDLVDSYDNADMVIVNTCGFLNSAIDESLEVIGEAIAENGKVLVTGCLGNKADLIKEKHPEVLSITGPQDYENLIEAVHTHAPIFANDFVSLVPPQGIKLTPRHYSYLKISEGCNNTCTFCIIPDIRGKLKSRSIDNIMKEAEKLKNAGVKELLVISQDTSAYGVDIKYKSGIWNNKEYQSNIIDLATALGDLDMWTRLHYVYPYPHVDKIVPLMAQGKILPYLDVPLQHSSPEVLKRMKRPAHTQKTLDRINKWRDICPDITIRSTFIVGFPGETEADFEHLLDFAEKAQLDRVGCFKYSEVEGAKANQFDNLISEEVKQQRLDEFMGLQAQISTDKLQRFVGTEQQVIIDAINKDENYAIGRTKYDAPEVDGQVIIGDALERNLKVGEFATVEITESTEYDLIAD</sequence>
<reference key="1">
    <citation type="journal article" date="2007" name="Genome Biol.">
        <title>Comparison of Francisella tularensis genomes reveals evolutionary events associated with the emergence of human pathogenic strains.</title>
        <authorList>
            <person name="Rohmer L."/>
            <person name="Fong C."/>
            <person name="Abmayr S."/>
            <person name="Wasnick M."/>
            <person name="Larson Freeman T.J."/>
            <person name="Radey M."/>
            <person name="Guina T."/>
            <person name="Svensson K."/>
            <person name="Hayden H.S."/>
            <person name="Jacobs M."/>
            <person name="Gallagher L.A."/>
            <person name="Manoil C."/>
            <person name="Ernst R.K."/>
            <person name="Drees B."/>
            <person name="Buckley D."/>
            <person name="Haugen E."/>
            <person name="Bovee D."/>
            <person name="Zhou Y."/>
            <person name="Chang J."/>
            <person name="Levy R."/>
            <person name="Lim R."/>
            <person name="Gillett W."/>
            <person name="Guenthener D."/>
            <person name="Kang A."/>
            <person name="Shaffer S.A."/>
            <person name="Taylor G."/>
            <person name="Chen J."/>
            <person name="Gallis B."/>
            <person name="D'Argenio D.A."/>
            <person name="Forsman M."/>
            <person name="Olson M.V."/>
            <person name="Goodlett D.R."/>
            <person name="Kaul R."/>
            <person name="Miller S.I."/>
            <person name="Brittnacher M.J."/>
        </authorList>
    </citation>
    <scope>NUCLEOTIDE SEQUENCE [LARGE SCALE GENOMIC DNA]</scope>
    <source>
        <strain>U112</strain>
    </source>
</reference>
<gene>
    <name evidence="1" type="primary">rimO</name>
    <name type="ordered locus">FTN_0358</name>
</gene>
<organism>
    <name type="scientific">Francisella tularensis subsp. novicida (strain U112)</name>
    <dbReference type="NCBI Taxonomy" id="401614"/>
    <lineage>
        <taxon>Bacteria</taxon>
        <taxon>Pseudomonadati</taxon>
        <taxon>Pseudomonadota</taxon>
        <taxon>Gammaproteobacteria</taxon>
        <taxon>Thiotrichales</taxon>
        <taxon>Francisellaceae</taxon>
        <taxon>Francisella</taxon>
    </lineage>
</organism>
<evidence type="ECO:0000255" key="1">
    <source>
        <dbReference type="HAMAP-Rule" id="MF_01865"/>
    </source>
</evidence>
<evidence type="ECO:0000255" key="2">
    <source>
        <dbReference type="PROSITE-ProRule" id="PRU01266"/>
    </source>
</evidence>